<sequence>MGKEKIHISIVVIGHVDSGKSTTTGHLIYKLGGIDKRVIERFEKEAAEMNKRSFKYAWVLDKLKAERERGITIDIALWKFETTKYYCTVIDAPGHRDFIKNMITGTSQADCAVLIIDSTTGGFEAGISKDGQTREHALLAFTLGVKQMICCCNKMDATTPKYSKSRFEEIVKEVSSYLKKVGYNPDKIAFIPISGFEGDNMIDRSTNLDWYKGPTLLEALDQISEPKRPSDKPLRLPLQDVYKIGGIGTVPVGRVETGVIKPGMVVTFGPSGLTTEVKSVEMHHEALQEALPGDNVGFNVKNVAVKDLKRGYVASNSKDDPAKEAANFTAQVIIMNHPGQIGNGYAPVLDCHTSHIAVKFAEIQTKIDRRSGKELEKEPKFLKNGDAGFVKMIPTKPMVVETFMSYPPLGRFAVRDMRQTVAVGVIKSVEKKDPTGAKVTKAAIKKK</sequence>
<keyword id="KW-0963">Cytoplasm</keyword>
<keyword id="KW-0251">Elongation factor</keyword>
<keyword id="KW-0342">GTP-binding</keyword>
<keyword id="KW-0488">Methylation</keyword>
<keyword id="KW-0547">Nucleotide-binding</keyword>
<keyword id="KW-0597">Phosphoprotein</keyword>
<keyword id="KW-0648">Protein biosynthesis</keyword>
<dbReference type="EMBL" id="D12709">
    <property type="protein sequence ID" value="BAA02205.1"/>
    <property type="molecule type" value="mRNA"/>
</dbReference>
<dbReference type="PIR" id="S29312">
    <property type="entry name" value="JS0719"/>
</dbReference>
<dbReference type="SMR" id="P34823"/>
<dbReference type="OMA" id="FREWRIE"/>
<dbReference type="GO" id="GO:0005737">
    <property type="term" value="C:cytoplasm"/>
    <property type="evidence" value="ECO:0007669"/>
    <property type="project" value="UniProtKB-SubCell"/>
</dbReference>
<dbReference type="GO" id="GO:0005525">
    <property type="term" value="F:GTP binding"/>
    <property type="evidence" value="ECO:0007669"/>
    <property type="project" value="UniProtKB-KW"/>
</dbReference>
<dbReference type="GO" id="GO:0003924">
    <property type="term" value="F:GTPase activity"/>
    <property type="evidence" value="ECO:0007669"/>
    <property type="project" value="InterPro"/>
</dbReference>
<dbReference type="GO" id="GO:0003746">
    <property type="term" value="F:translation elongation factor activity"/>
    <property type="evidence" value="ECO:0007669"/>
    <property type="project" value="UniProtKB-KW"/>
</dbReference>
<dbReference type="CDD" id="cd01883">
    <property type="entry name" value="EF1_alpha"/>
    <property type="match status" value="1"/>
</dbReference>
<dbReference type="CDD" id="cd03693">
    <property type="entry name" value="EF1_alpha_II"/>
    <property type="match status" value="1"/>
</dbReference>
<dbReference type="CDD" id="cd03705">
    <property type="entry name" value="EF1_alpha_III"/>
    <property type="match status" value="1"/>
</dbReference>
<dbReference type="FunFam" id="2.40.30.10:FF:000003">
    <property type="entry name" value="Elongation factor 1-alpha"/>
    <property type="match status" value="1"/>
</dbReference>
<dbReference type="FunFam" id="2.40.30.10:FF:000005">
    <property type="entry name" value="Elongation factor 1-alpha"/>
    <property type="match status" value="1"/>
</dbReference>
<dbReference type="FunFam" id="3.40.50.300:FF:000255">
    <property type="entry name" value="Elongation factor 1-alpha"/>
    <property type="match status" value="1"/>
</dbReference>
<dbReference type="Gene3D" id="3.40.50.300">
    <property type="entry name" value="P-loop containing nucleotide triphosphate hydrolases"/>
    <property type="match status" value="1"/>
</dbReference>
<dbReference type="Gene3D" id="2.40.30.10">
    <property type="entry name" value="Translation factors"/>
    <property type="match status" value="2"/>
</dbReference>
<dbReference type="HAMAP" id="MF_00118_A">
    <property type="entry name" value="EF_Tu_A"/>
    <property type="match status" value="1"/>
</dbReference>
<dbReference type="InterPro" id="IPR004161">
    <property type="entry name" value="EFTu-like_2"/>
</dbReference>
<dbReference type="InterPro" id="IPR031157">
    <property type="entry name" value="G_TR_CS"/>
</dbReference>
<dbReference type="InterPro" id="IPR054696">
    <property type="entry name" value="GTP-eEF1A_C"/>
</dbReference>
<dbReference type="InterPro" id="IPR027417">
    <property type="entry name" value="P-loop_NTPase"/>
</dbReference>
<dbReference type="InterPro" id="IPR000795">
    <property type="entry name" value="T_Tr_GTP-bd_dom"/>
</dbReference>
<dbReference type="InterPro" id="IPR050100">
    <property type="entry name" value="TRAFAC_GTPase_members"/>
</dbReference>
<dbReference type="InterPro" id="IPR009000">
    <property type="entry name" value="Transl_B-barrel_sf"/>
</dbReference>
<dbReference type="InterPro" id="IPR009001">
    <property type="entry name" value="Transl_elong_EF1A/Init_IF2_C"/>
</dbReference>
<dbReference type="InterPro" id="IPR004539">
    <property type="entry name" value="Transl_elong_EF1A_euk/arc"/>
</dbReference>
<dbReference type="NCBIfam" id="TIGR00483">
    <property type="entry name" value="EF-1_alpha"/>
    <property type="match status" value="1"/>
</dbReference>
<dbReference type="NCBIfam" id="NF008969">
    <property type="entry name" value="PRK12317.1"/>
    <property type="match status" value="1"/>
</dbReference>
<dbReference type="PANTHER" id="PTHR23115">
    <property type="entry name" value="TRANSLATION FACTOR"/>
    <property type="match status" value="1"/>
</dbReference>
<dbReference type="Pfam" id="PF22594">
    <property type="entry name" value="GTP-eEF1A_C"/>
    <property type="match status" value="1"/>
</dbReference>
<dbReference type="Pfam" id="PF00009">
    <property type="entry name" value="GTP_EFTU"/>
    <property type="match status" value="1"/>
</dbReference>
<dbReference type="Pfam" id="PF03144">
    <property type="entry name" value="GTP_EFTU_D2"/>
    <property type="match status" value="1"/>
</dbReference>
<dbReference type="PRINTS" id="PR00315">
    <property type="entry name" value="ELONGATNFCT"/>
</dbReference>
<dbReference type="SUPFAM" id="SSF50465">
    <property type="entry name" value="EF-Tu/eEF-1alpha/eIF2-gamma C-terminal domain"/>
    <property type="match status" value="1"/>
</dbReference>
<dbReference type="SUPFAM" id="SSF52540">
    <property type="entry name" value="P-loop containing nucleoside triphosphate hydrolases"/>
    <property type="match status" value="1"/>
</dbReference>
<dbReference type="SUPFAM" id="SSF50447">
    <property type="entry name" value="Translation proteins"/>
    <property type="match status" value="1"/>
</dbReference>
<dbReference type="PROSITE" id="PS00301">
    <property type="entry name" value="G_TR_1"/>
    <property type="match status" value="1"/>
</dbReference>
<dbReference type="PROSITE" id="PS51722">
    <property type="entry name" value="G_TR_2"/>
    <property type="match status" value="1"/>
</dbReference>
<protein>
    <recommendedName>
        <fullName>Elongation factor 1-alpha</fullName>
        <shortName>EF-1-alpha</shortName>
    </recommendedName>
</protein>
<feature type="chain" id="PRO_0000090934" description="Elongation factor 1-alpha">
    <location>
        <begin position="1"/>
        <end position="447"/>
    </location>
</feature>
<feature type="domain" description="tr-type G">
    <location>
        <begin position="5"/>
        <end position="230"/>
    </location>
</feature>
<feature type="region of interest" description="G1" evidence="1">
    <location>
        <begin position="14"/>
        <end position="21"/>
    </location>
</feature>
<feature type="region of interest" description="G2" evidence="1">
    <location>
        <begin position="70"/>
        <end position="74"/>
    </location>
</feature>
<feature type="region of interest" description="G3" evidence="1">
    <location>
        <begin position="91"/>
        <end position="94"/>
    </location>
</feature>
<feature type="region of interest" description="G4" evidence="1">
    <location>
        <begin position="153"/>
        <end position="156"/>
    </location>
</feature>
<feature type="region of interest" description="G5" evidence="1">
    <location>
        <begin position="194"/>
        <end position="196"/>
    </location>
</feature>
<feature type="binding site" evidence="1">
    <location>
        <begin position="14"/>
        <end position="21"/>
    </location>
    <ligand>
        <name>GTP</name>
        <dbReference type="ChEBI" id="CHEBI:37565"/>
    </ligand>
</feature>
<feature type="binding site" evidence="1">
    <location>
        <begin position="91"/>
        <end position="95"/>
    </location>
    <ligand>
        <name>GTP</name>
        <dbReference type="ChEBI" id="CHEBI:37565"/>
    </ligand>
</feature>
<feature type="binding site" evidence="1">
    <location>
        <begin position="153"/>
        <end position="156"/>
    </location>
    <ligand>
        <name>GTP</name>
        <dbReference type="ChEBI" id="CHEBI:37565"/>
    </ligand>
</feature>
<feature type="modified residue" description="N6,N6-dimethyllysine" evidence="2">
    <location>
        <position position="55"/>
    </location>
</feature>
<feature type="modified residue" description="N6,N6,N6-trimethyllysine" evidence="2">
    <location>
        <position position="79"/>
    </location>
</feature>
<feature type="modified residue" description="N6,N6,N6-trimethyllysine" evidence="2">
    <location>
        <position position="187"/>
    </location>
</feature>
<feature type="modified residue" description="N6-methyllysine" evidence="2">
    <location>
        <position position="261"/>
    </location>
</feature>
<feature type="modified residue" description="5-glutamyl glycerylphosphorylethanolamine" evidence="1">
    <location>
        <position position="289"/>
    </location>
</feature>
<feature type="modified residue" description="N6,N6,N6-trimethyllysine" evidence="2">
    <location>
        <position position="306"/>
    </location>
</feature>
<feature type="modified residue" description="5-glutamyl glycerylphosphorylethanolamine" evidence="1">
    <location>
        <position position="362"/>
    </location>
</feature>
<feature type="modified residue" description="N6,N6,N6-trimethyllysine" evidence="2">
    <location>
        <position position="396"/>
    </location>
</feature>
<reference key="1">
    <citation type="journal article" date="1992" name="Eur. J. Biochem.">
        <title>A gene expressed preferentially in the globular stage of somatic embryogenesis encodes elongation-factor 1 alpha in carrot.</title>
        <authorList>
            <person name="Fukuda H."/>
            <person name="Kawahara R."/>
            <person name="Sunabori S."/>
            <person name="Komamine A."/>
        </authorList>
    </citation>
    <scope>NUCLEOTIDE SEQUENCE [MRNA]</scope>
</reference>
<accession>P34823</accession>
<organism>
    <name type="scientific">Daucus carota</name>
    <name type="common">Wild carrot</name>
    <dbReference type="NCBI Taxonomy" id="4039"/>
    <lineage>
        <taxon>Eukaryota</taxon>
        <taxon>Viridiplantae</taxon>
        <taxon>Streptophyta</taxon>
        <taxon>Embryophyta</taxon>
        <taxon>Tracheophyta</taxon>
        <taxon>Spermatophyta</taxon>
        <taxon>Magnoliopsida</taxon>
        <taxon>eudicotyledons</taxon>
        <taxon>Gunneridae</taxon>
        <taxon>Pentapetalae</taxon>
        <taxon>asterids</taxon>
        <taxon>campanulids</taxon>
        <taxon>Apiales</taxon>
        <taxon>Apiaceae</taxon>
        <taxon>Apioideae</taxon>
        <taxon>Scandiceae</taxon>
        <taxon>Daucinae</taxon>
        <taxon>Daucus</taxon>
        <taxon>Daucus sect. Daucus</taxon>
    </lineage>
</organism>
<comment type="function">
    <text>This protein promotes the GTP-dependent binding of aminoacyl-tRNA to the A-site of ribosomes during protein biosynthesis.</text>
</comment>
<comment type="subcellular location">
    <subcellularLocation>
        <location>Cytoplasm</location>
    </subcellularLocation>
</comment>
<comment type="similarity">
    <text evidence="3">Belongs to the TRAFAC class translation factor GTPase superfamily. Classic translation factor GTPase family. EF-Tu/EF-1A subfamily.</text>
</comment>
<name>EF1A2_DAUCA</name>
<proteinExistence type="evidence at transcript level"/>
<evidence type="ECO:0000250" key="1"/>
<evidence type="ECO:0000250" key="2">
    <source>
        <dbReference type="UniProtKB" id="Q8GTY0"/>
    </source>
</evidence>
<evidence type="ECO:0000305" key="3"/>